<feature type="chain" id="PRO_0000367531" description="SAGA-associated factor 11 homolog">
    <location>
        <begin position="1"/>
        <end position="189"/>
    </location>
</feature>
<feature type="zinc finger region" description="SGF11-type" evidence="2">
    <location>
        <begin position="94"/>
        <end position="115"/>
    </location>
</feature>
<feature type="region of interest" description="Disordered" evidence="3">
    <location>
        <begin position="128"/>
        <end position="189"/>
    </location>
</feature>
<feature type="compositionally biased region" description="Low complexity" evidence="3">
    <location>
        <begin position="136"/>
        <end position="145"/>
    </location>
</feature>
<feature type="compositionally biased region" description="Low complexity" evidence="3">
    <location>
        <begin position="175"/>
        <end position="189"/>
    </location>
</feature>
<feature type="modified residue" description="Phosphoserine" evidence="1">
    <location>
        <position position="165"/>
    </location>
</feature>
<comment type="function">
    <text evidence="2">Component of the transcription regulatory histone acetylation (HAT) complex SAGA, a multiprotein complex that activates transcription by remodeling chromatin and mediating histone acetylation and deubiquitination. Within the SAGA complex, participates in a subcomplex that specifically deubiquitinates histone H2B. The SAGA complex is recruited to specific gene promoters by activators, where it is required for transcription. Required for nuclear receptor-mediated transactivation. Binds independently on SAGA to promoters in an RNA-dependent manner. Binds to mRNA and is essential for total mRNA export from the nucleus. Required to counteract heterochromatin silencing. Controls the development of neuronal connectivity in visual system by being required for accurate axon targeting in the optic lobe. Required for expression of ecdysone-induced genes such as br/broad.</text>
</comment>
<comment type="subunit">
    <text evidence="2">Component of some SAGA transcription coactivator-HAT complexes, at least composed of Ada2b, not/nonstop, Pcaf/Gcn5, Sgf11 and Spt3. Within the SAGA complex, Sgf11, e(y)2, and not/nonstop form an additional subcomplex of SAGA called the DUB module (deubiquitination module). Interacts directly with not/nonstop. Interacts with the AMEX complex component xmas-2. Interacts with Cbp80; important for promoter recruitment of Sgf11 that is not associated with the DUB module.</text>
</comment>
<comment type="subcellular location">
    <subcellularLocation>
        <location evidence="2">Nucleus</location>
        <location evidence="2">Nucleoplasm</location>
    </subcellularLocation>
    <subcellularLocation>
        <location evidence="2">Cytoplasm</location>
    </subcellularLocation>
    <text evidence="2">Localizes to nuclear periphery, in contact with the nuclear pore complex (NPC).</text>
</comment>
<comment type="domain">
    <text evidence="2">The long N-terminal helix forms part of the 'assembly lobe' of the SAGA deubiquitination module.</text>
</comment>
<comment type="domain">
    <text evidence="2">The C-terminal SGF11-type zinc-finger domain together with the C-terminal catalytic domain of not/nonstop forms the 'catalytic lobe' of the SAGA deubiquitination module.</text>
</comment>
<comment type="similarity">
    <text evidence="2">Belongs to the SGF11 family.</text>
</comment>
<proteinExistence type="inferred from homology"/>
<accession>B4LDA6</accession>
<dbReference type="EMBL" id="CH940647">
    <property type="protein sequence ID" value="EDW71013.1"/>
    <property type="molecule type" value="Genomic_DNA"/>
</dbReference>
<dbReference type="RefSeq" id="XP_002048671.2">
    <property type="nucleotide sequence ID" value="XM_002048635.2"/>
</dbReference>
<dbReference type="FunCoup" id="B4LDA6">
    <property type="interactions" value="228"/>
</dbReference>
<dbReference type="STRING" id="7244.B4LDA6"/>
<dbReference type="EnsemblMetazoa" id="FBtr0230026">
    <property type="protein sequence ID" value="FBpp0228518"/>
    <property type="gene ID" value="FBgn0201319"/>
</dbReference>
<dbReference type="EnsemblMetazoa" id="XM_002048635.3">
    <property type="protein sequence ID" value="XP_002048671.2"/>
    <property type="gene ID" value="LOC6624587"/>
</dbReference>
<dbReference type="GeneID" id="6624587"/>
<dbReference type="KEGG" id="dvi:6624587"/>
<dbReference type="CTD" id="40035"/>
<dbReference type="eggNOG" id="KOG2612">
    <property type="taxonomic scope" value="Eukaryota"/>
</dbReference>
<dbReference type="HOGENOM" id="CLU_100743_0_0_1"/>
<dbReference type="InParanoid" id="B4LDA6"/>
<dbReference type="OMA" id="RMCEMPN"/>
<dbReference type="OrthoDB" id="21557at2759"/>
<dbReference type="PhylomeDB" id="B4LDA6"/>
<dbReference type="Proteomes" id="UP000008792">
    <property type="component" value="Unassembled WGS sequence"/>
</dbReference>
<dbReference type="GO" id="GO:0005737">
    <property type="term" value="C:cytoplasm"/>
    <property type="evidence" value="ECO:0007669"/>
    <property type="project" value="UniProtKB-SubCell"/>
</dbReference>
<dbReference type="GO" id="GO:0071819">
    <property type="term" value="C:DUBm complex"/>
    <property type="evidence" value="ECO:0007669"/>
    <property type="project" value="UniProtKB-UniRule"/>
</dbReference>
<dbReference type="GO" id="GO:0005643">
    <property type="term" value="C:nuclear pore"/>
    <property type="evidence" value="ECO:0007669"/>
    <property type="project" value="UniProtKB-UniRule"/>
</dbReference>
<dbReference type="GO" id="GO:0005654">
    <property type="term" value="C:nucleoplasm"/>
    <property type="evidence" value="ECO:0007669"/>
    <property type="project" value="UniProtKB-SubCell"/>
</dbReference>
<dbReference type="GO" id="GO:0000124">
    <property type="term" value="C:SAGA complex"/>
    <property type="evidence" value="ECO:0000250"/>
    <property type="project" value="UniProtKB"/>
</dbReference>
<dbReference type="GO" id="GO:0003713">
    <property type="term" value="F:transcription coactivator activity"/>
    <property type="evidence" value="ECO:0007669"/>
    <property type="project" value="UniProtKB-UniRule"/>
</dbReference>
<dbReference type="GO" id="GO:0008270">
    <property type="term" value="F:zinc ion binding"/>
    <property type="evidence" value="ECO:0007669"/>
    <property type="project" value="UniProtKB-UniRule"/>
</dbReference>
<dbReference type="GO" id="GO:0006325">
    <property type="term" value="P:chromatin organization"/>
    <property type="evidence" value="ECO:0000250"/>
    <property type="project" value="UniProtKB"/>
</dbReference>
<dbReference type="GO" id="GO:0006406">
    <property type="term" value="P:mRNA export from nucleus"/>
    <property type="evidence" value="ECO:0007669"/>
    <property type="project" value="UniProtKB-UniRule"/>
</dbReference>
<dbReference type="GO" id="GO:0045893">
    <property type="term" value="P:positive regulation of DNA-templated transcription"/>
    <property type="evidence" value="ECO:0000250"/>
    <property type="project" value="UniProtKB"/>
</dbReference>
<dbReference type="GO" id="GO:0015031">
    <property type="term" value="P:protein transport"/>
    <property type="evidence" value="ECO:0007669"/>
    <property type="project" value="UniProtKB-KW"/>
</dbReference>
<dbReference type="GO" id="GO:0006357">
    <property type="term" value="P:regulation of transcription by RNA polymerase II"/>
    <property type="evidence" value="ECO:0007669"/>
    <property type="project" value="TreeGrafter"/>
</dbReference>
<dbReference type="FunFam" id="3.30.160.60:FF:000118">
    <property type="entry name" value="Ataxin-7-like protein 3"/>
    <property type="match status" value="1"/>
</dbReference>
<dbReference type="Gene3D" id="3.30.160.60">
    <property type="entry name" value="Classic Zinc Finger"/>
    <property type="match status" value="1"/>
</dbReference>
<dbReference type="HAMAP" id="MF_03047">
    <property type="entry name" value="Sgf11"/>
    <property type="match status" value="1"/>
</dbReference>
<dbReference type="InterPro" id="IPR013246">
    <property type="entry name" value="SAGA_su_Sgf11"/>
</dbReference>
<dbReference type="InterPro" id="IPR051078">
    <property type="entry name" value="SGF11"/>
</dbReference>
<dbReference type="PANTHER" id="PTHR46367">
    <property type="entry name" value="ATAXIN-7-LIKE PROTEIN 3"/>
    <property type="match status" value="1"/>
</dbReference>
<dbReference type="PANTHER" id="PTHR46367:SF1">
    <property type="entry name" value="ATAXIN-7-LIKE PROTEIN 3"/>
    <property type="match status" value="1"/>
</dbReference>
<dbReference type="Pfam" id="PF08209">
    <property type="entry name" value="Sgf11"/>
    <property type="match status" value="1"/>
</dbReference>
<evidence type="ECO:0000250" key="1"/>
<evidence type="ECO:0000255" key="2">
    <source>
        <dbReference type="HAMAP-Rule" id="MF_03047"/>
    </source>
</evidence>
<evidence type="ECO:0000256" key="3">
    <source>
        <dbReference type="SAM" id="MobiDB-lite"/>
    </source>
</evidence>
<reference key="1">
    <citation type="journal article" date="2007" name="Nature">
        <title>Evolution of genes and genomes on the Drosophila phylogeny.</title>
        <authorList>
            <consortium name="Drosophila 12 genomes consortium"/>
        </authorList>
    </citation>
    <scope>NUCLEOTIDE SEQUENCE [LARGE SCALE GENOMIC DNA]</scope>
    <source>
        <strain>Tucson 15010-1051.87</strain>
    </source>
</reference>
<gene>
    <name evidence="2" type="primary">Sgf11</name>
    <name type="ORF">GJ14101</name>
</gene>
<name>SGF11_DROVI</name>
<protein>
    <recommendedName>
        <fullName evidence="2">SAGA-associated factor 11 homolog</fullName>
    </recommendedName>
</protein>
<sequence>MAQGHTTASAILHNFRELIKEPKGLDDAANYLFQGLLDDVVAGIFIEIHHLRKTGNLTALDGVGEENAESAYRICEMPNLDIFGISTAKKPMDCTCPNCDRLVAATRFAPHLEKCMGMGRISSRIASRRLATKEGSSASSTSTSTYLQSGNTGGTDDEDDVDWSSDKRKKKSTQNSRNNGSKKNNGKTF</sequence>
<organism>
    <name type="scientific">Drosophila virilis</name>
    <name type="common">Fruit fly</name>
    <dbReference type="NCBI Taxonomy" id="7244"/>
    <lineage>
        <taxon>Eukaryota</taxon>
        <taxon>Metazoa</taxon>
        <taxon>Ecdysozoa</taxon>
        <taxon>Arthropoda</taxon>
        <taxon>Hexapoda</taxon>
        <taxon>Insecta</taxon>
        <taxon>Pterygota</taxon>
        <taxon>Neoptera</taxon>
        <taxon>Endopterygota</taxon>
        <taxon>Diptera</taxon>
        <taxon>Brachycera</taxon>
        <taxon>Muscomorpha</taxon>
        <taxon>Ephydroidea</taxon>
        <taxon>Drosophilidae</taxon>
        <taxon>Drosophila</taxon>
    </lineage>
</organism>
<keyword id="KW-0010">Activator</keyword>
<keyword id="KW-0156">Chromatin regulator</keyword>
<keyword id="KW-0963">Cytoplasm</keyword>
<keyword id="KW-0479">Metal-binding</keyword>
<keyword id="KW-0509">mRNA transport</keyword>
<keyword id="KW-0539">Nucleus</keyword>
<keyword id="KW-0597">Phosphoprotein</keyword>
<keyword id="KW-0653">Protein transport</keyword>
<keyword id="KW-1185">Reference proteome</keyword>
<keyword id="KW-0804">Transcription</keyword>
<keyword id="KW-0805">Transcription regulation</keyword>
<keyword id="KW-0811">Translocation</keyword>
<keyword id="KW-0813">Transport</keyword>
<keyword id="KW-0862">Zinc</keyword>
<keyword id="KW-0863">Zinc-finger</keyword>